<protein>
    <recommendedName>
        <fullName evidence="1">ATP synthase gamma chain</fullName>
    </recommendedName>
    <alternativeName>
        <fullName evidence="1">ATP synthase F1 sector gamma subunit</fullName>
    </alternativeName>
    <alternativeName>
        <fullName evidence="1">F-ATPase gamma subunit</fullName>
    </alternativeName>
</protein>
<feature type="chain" id="PRO_1000053338" description="ATP synthase gamma chain">
    <location>
        <begin position="1"/>
        <end position="287"/>
    </location>
</feature>
<proteinExistence type="inferred from homology"/>
<evidence type="ECO:0000255" key="1">
    <source>
        <dbReference type="HAMAP-Rule" id="MF_00815"/>
    </source>
</evidence>
<name>ATPG_SHISS</name>
<sequence>MAGAKEIRSKIASVQNTQKITKAMEMVAASKMRKSQDRMAASRPYAETMRKVIGHLAHGNLEYKHPYLEDRDVKRVGYLVVSTDRGLCGGLNINLFKKLLAEMKTWTDKSVQCDLAMIGSKGVSFFNSVGGNVVAQVTGMGDNPSLSELIGPVKVMLQAYDEGRLDKLYIVSNKFINTMSQVPTISQLLPLPASDDDDLKHKSWDYLYEPDPKALLDTLLRRYVESQVYQGVVENLASEQAARMVAMKAATDNGGSLIKELQLVYNKARQASITQELTEIVSGAAAV</sequence>
<comment type="function">
    <text evidence="1">Produces ATP from ADP in the presence of a proton gradient across the membrane. The gamma chain is believed to be important in regulating ATPase activity and the flow of protons through the CF(0) complex.</text>
</comment>
<comment type="subunit">
    <text evidence="1">F-type ATPases have 2 components, CF(1) - the catalytic core - and CF(0) - the membrane proton channel. CF(1) has five subunits: alpha(3), beta(3), gamma(1), delta(1), epsilon(1). CF(0) has three main subunits: a, b and c.</text>
</comment>
<comment type="subcellular location">
    <subcellularLocation>
        <location evidence="1">Cell inner membrane</location>
        <topology evidence="1">Peripheral membrane protein</topology>
    </subcellularLocation>
</comment>
<comment type="similarity">
    <text evidence="1">Belongs to the ATPase gamma chain family.</text>
</comment>
<organism>
    <name type="scientific">Shigella sonnei (strain Ss046)</name>
    <dbReference type="NCBI Taxonomy" id="300269"/>
    <lineage>
        <taxon>Bacteria</taxon>
        <taxon>Pseudomonadati</taxon>
        <taxon>Pseudomonadota</taxon>
        <taxon>Gammaproteobacteria</taxon>
        <taxon>Enterobacterales</taxon>
        <taxon>Enterobacteriaceae</taxon>
        <taxon>Shigella</taxon>
    </lineage>
</organism>
<reference key="1">
    <citation type="journal article" date="2005" name="Nucleic Acids Res.">
        <title>Genome dynamics and diversity of Shigella species, the etiologic agents of bacillary dysentery.</title>
        <authorList>
            <person name="Yang F."/>
            <person name="Yang J."/>
            <person name="Zhang X."/>
            <person name="Chen L."/>
            <person name="Jiang Y."/>
            <person name="Yan Y."/>
            <person name="Tang X."/>
            <person name="Wang J."/>
            <person name="Xiong Z."/>
            <person name="Dong J."/>
            <person name="Xue Y."/>
            <person name="Zhu Y."/>
            <person name="Xu X."/>
            <person name="Sun L."/>
            <person name="Chen S."/>
            <person name="Nie H."/>
            <person name="Peng J."/>
            <person name="Xu J."/>
            <person name="Wang Y."/>
            <person name="Yuan Z."/>
            <person name="Wen Y."/>
            <person name="Yao Z."/>
            <person name="Shen Y."/>
            <person name="Qiang B."/>
            <person name="Hou Y."/>
            <person name="Yu J."/>
            <person name="Jin Q."/>
        </authorList>
    </citation>
    <scope>NUCLEOTIDE SEQUENCE [LARGE SCALE GENOMIC DNA]</scope>
    <source>
        <strain>Ss046</strain>
    </source>
</reference>
<keyword id="KW-0066">ATP synthesis</keyword>
<keyword id="KW-0997">Cell inner membrane</keyword>
<keyword id="KW-1003">Cell membrane</keyword>
<keyword id="KW-0139">CF(1)</keyword>
<keyword id="KW-0375">Hydrogen ion transport</keyword>
<keyword id="KW-0406">Ion transport</keyword>
<keyword id="KW-0472">Membrane</keyword>
<keyword id="KW-1185">Reference proteome</keyword>
<keyword id="KW-0813">Transport</keyword>
<accession>Q3YVN7</accession>
<dbReference type="EMBL" id="CP000038">
    <property type="protein sequence ID" value="AAZ90425.1"/>
    <property type="molecule type" value="Genomic_DNA"/>
</dbReference>
<dbReference type="RefSeq" id="WP_000896500.1">
    <property type="nucleotide sequence ID" value="NC_007384.1"/>
</dbReference>
<dbReference type="SMR" id="Q3YVN7"/>
<dbReference type="KEGG" id="ssn:SSON_3886"/>
<dbReference type="HOGENOM" id="CLU_050669_0_1_6"/>
<dbReference type="Proteomes" id="UP000002529">
    <property type="component" value="Chromosome"/>
</dbReference>
<dbReference type="GO" id="GO:0005886">
    <property type="term" value="C:plasma membrane"/>
    <property type="evidence" value="ECO:0007669"/>
    <property type="project" value="UniProtKB-SubCell"/>
</dbReference>
<dbReference type="GO" id="GO:0045259">
    <property type="term" value="C:proton-transporting ATP synthase complex"/>
    <property type="evidence" value="ECO:0007669"/>
    <property type="project" value="UniProtKB-KW"/>
</dbReference>
<dbReference type="GO" id="GO:0005524">
    <property type="term" value="F:ATP binding"/>
    <property type="evidence" value="ECO:0007669"/>
    <property type="project" value="UniProtKB-UniRule"/>
</dbReference>
<dbReference type="GO" id="GO:0046933">
    <property type="term" value="F:proton-transporting ATP synthase activity, rotational mechanism"/>
    <property type="evidence" value="ECO:0007669"/>
    <property type="project" value="UniProtKB-UniRule"/>
</dbReference>
<dbReference type="GO" id="GO:0042777">
    <property type="term" value="P:proton motive force-driven plasma membrane ATP synthesis"/>
    <property type="evidence" value="ECO:0007669"/>
    <property type="project" value="UniProtKB-UniRule"/>
</dbReference>
<dbReference type="CDD" id="cd12151">
    <property type="entry name" value="F1-ATPase_gamma"/>
    <property type="match status" value="1"/>
</dbReference>
<dbReference type="FunFam" id="1.10.287.80:FF:000005">
    <property type="entry name" value="ATP synthase gamma chain"/>
    <property type="match status" value="2"/>
</dbReference>
<dbReference type="FunFam" id="3.40.1380.10:FF:000001">
    <property type="entry name" value="ATP synthase gamma chain"/>
    <property type="match status" value="1"/>
</dbReference>
<dbReference type="Gene3D" id="3.40.1380.10">
    <property type="match status" value="1"/>
</dbReference>
<dbReference type="Gene3D" id="1.10.287.80">
    <property type="entry name" value="ATP synthase, gamma subunit, helix hairpin domain"/>
    <property type="match status" value="1"/>
</dbReference>
<dbReference type="HAMAP" id="MF_00815">
    <property type="entry name" value="ATP_synth_gamma_bact"/>
    <property type="match status" value="1"/>
</dbReference>
<dbReference type="InterPro" id="IPR035968">
    <property type="entry name" value="ATP_synth_F1_ATPase_gsu"/>
</dbReference>
<dbReference type="InterPro" id="IPR000131">
    <property type="entry name" value="ATP_synth_F1_gsu"/>
</dbReference>
<dbReference type="InterPro" id="IPR023632">
    <property type="entry name" value="ATP_synth_F1_gsu_CS"/>
</dbReference>
<dbReference type="NCBIfam" id="TIGR01146">
    <property type="entry name" value="ATPsyn_F1gamma"/>
    <property type="match status" value="1"/>
</dbReference>
<dbReference type="NCBIfam" id="NF004144">
    <property type="entry name" value="PRK05621.1-1"/>
    <property type="match status" value="1"/>
</dbReference>
<dbReference type="PANTHER" id="PTHR11693">
    <property type="entry name" value="ATP SYNTHASE GAMMA CHAIN"/>
    <property type="match status" value="1"/>
</dbReference>
<dbReference type="PANTHER" id="PTHR11693:SF22">
    <property type="entry name" value="ATP SYNTHASE SUBUNIT GAMMA, MITOCHONDRIAL"/>
    <property type="match status" value="1"/>
</dbReference>
<dbReference type="Pfam" id="PF00231">
    <property type="entry name" value="ATP-synt"/>
    <property type="match status" value="1"/>
</dbReference>
<dbReference type="PRINTS" id="PR00126">
    <property type="entry name" value="ATPASEGAMMA"/>
</dbReference>
<dbReference type="SUPFAM" id="SSF52943">
    <property type="entry name" value="ATP synthase (F1-ATPase), gamma subunit"/>
    <property type="match status" value="1"/>
</dbReference>
<dbReference type="PROSITE" id="PS00153">
    <property type="entry name" value="ATPASE_GAMMA"/>
    <property type="match status" value="1"/>
</dbReference>
<gene>
    <name evidence="1" type="primary">atpG</name>
    <name type="ordered locus">SSON_3886</name>
</gene>